<feature type="chain" id="PRO_1000009216" description="UPF0102 protein YraN">
    <location>
        <begin position="1"/>
        <end position="131"/>
    </location>
</feature>
<feature type="region of interest" description="Disordered" evidence="2">
    <location>
        <begin position="1"/>
        <end position="21"/>
    </location>
</feature>
<feature type="compositionally biased region" description="Polar residues" evidence="2">
    <location>
        <begin position="1"/>
        <end position="19"/>
    </location>
</feature>
<dbReference type="EMBL" id="CP000247">
    <property type="protein sequence ID" value="ABG71218.1"/>
    <property type="molecule type" value="Genomic_DNA"/>
</dbReference>
<dbReference type="RefSeq" id="WP_000246829.1">
    <property type="nucleotide sequence ID" value="NC_008253.1"/>
</dbReference>
<dbReference type="SMR" id="Q0TCW1"/>
<dbReference type="KEGG" id="ecp:ECP_3236"/>
<dbReference type="HOGENOM" id="CLU_115353_1_0_6"/>
<dbReference type="Proteomes" id="UP000009182">
    <property type="component" value="Chromosome"/>
</dbReference>
<dbReference type="GO" id="GO:0003676">
    <property type="term" value="F:nucleic acid binding"/>
    <property type="evidence" value="ECO:0007669"/>
    <property type="project" value="InterPro"/>
</dbReference>
<dbReference type="CDD" id="cd20736">
    <property type="entry name" value="PoNe_Nuclease"/>
    <property type="match status" value="1"/>
</dbReference>
<dbReference type="Gene3D" id="3.40.1350.10">
    <property type="match status" value="1"/>
</dbReference>
<dbReference type="HAMAP" id="MF_00048">
    <property type="entry name" value="UPF0102"/>
    <property type="match status" value="1"/>
</dbReference>
<dbReference type="InterPro" id="IPR011335">
    <property type="entry name" value="Restrct_endonuc-II-like"/>
</dbReference>
<dbReference type="InterPro" id="IPR011856">
    <property type="entry name" value="tRNA_endonuc-like_dom_sf"/>
</dbReference>
<dbReference type="InterPro" id="IPR003509">
    <property type="entry name" value="UPF0102_YraN-like"/>
</dbReference>
<dbReference type="NCBIfam" id="NF009150">
    <property type="entry name" value="PRK12497.1-3"/>
    <property type="match status" value="1"/>
</dbReference>
<dbReference type="NCBIfam" id="TIGR00252">
    <property type="entry name" value="YraN family protein"/>
    <property type="match status" value="1"/>
</dbReference>
<dbReference type="PANTHER" id="PTHR34039">
    <property type="entry name" value="UPF0102 PROTEIN YRAN"/>
    <property type="match status" value="1"/>
</dbReference>
<dbReference type="PANTHER" id="PTHR34039:SF1">
    <property type="entry name" value="UPF0102 PROTEIN YRAN"/>
    <property type="match status" value="1"/>
</dbReference>
<dbReference type="Pfam" id="PF02021">
    <property type="entry name" value="UPF0102"/>
    <property type="match status" value="1"/>
</dbReference>
<dbReference type="SUPFAM" id="SSF52980">
    <property type="entry name" value="Restriction endonuclease-like"/>
    <property type="match status" value="1"/>
</dbReference>
<evidence type="ECO:0000255" key="1">
    <source>
        <dbReference type="HAMAP-Rule" id="MF_00048"/>
    </source>
</evidence>
<evidence type="ECO:0000256" key="2">
    <source>
        <dbReference type="SAM" id="MobiDB-lite"/>
    </source>
</evidence>
<comment type="similarity">
    <text evidence="1">Belongs to the UPF0102 family.</text>
</comment>
<name>YRAN_ECOL5</name>
<organism>
    <name type="scientific">Escherichia coli O6:K15:H31 (strain 536 / UPEC)</name>
    <dbReference type="NCBI Taxonomy" id="362663"/>
    <lineage>
        <taxon>Bacteria</taxon>
        <taxon>Pseudomonadati</taxon>
        <taxon>Pseudomonadota</taxon>
        <taxon>Gammaproteobacteria</taxon>
        <taxon>Enterobacterales</taxon>
        <taxon>Enterobacteriaceae</taxon>
        <taxon>Escherichia</taxon>
    </lineage>
</organism>
<proteinExistence type="inferred from homology"/>
<accession>Q0TCW1</accession>
<sequence length="131" mass="14812">MATVPTRSGSPRQLTTKQTGDAWEAQARRWLEGKGLRFIAANVNERGGEIDLIMREGRTTIFIEVRYRRSALYGGAAASVTRSKQHKLLQTARLWLARHNGSFDTVDCRFDVVAFTGNEVEWIKDAFNDHS</sequence>
<protein>
    <recommendedName>
        <fullName evidence="1">UPF0102 protein YraN</fullName>
    </recommendedName>
</protein>
<gene>
    <name evidence="1" type="primary">yraN</name>
    <name type="ordered locus">ECP_3236</name>
</gene>
<reference key="1">
    <citation type="journal article" date="2006" name="Mol. Microbiol.">
        <title>Role of pathogenicity island-associated integrases in the genome plasticity of uropathogenic Escherichia coli strain 536.</title>
        <authorList>
            <person name="Hochhut B."/>
            <person name="Wilde C."/>
            <person name="Balling G."/>
            <person name="Middendorf B."/>
            <person name="Dobrindt U."/>
            <person name="Brzuszkiewicz E."/>
            <person name="Gottschalk G."/>
            <person name="Carniel E."/>
            <person name="Hacker J."/>
        </authorList>
    </citation>
    <scope>NUCLEOTIDE SEQUENCE [LARGE SCALE GENOMIC DNA]</scope>
    <source>
        <strain>536 / UPEC</strain>
    </source>
</reference>